<sequence>MSTTIKYEMMILLTEEFNDNELKTWAFNYAKALRKLNASEISVISRGKRDLSYEIANQKRGNFIQISFSSIPKYIENFSSSLKFDSNVLRFLVLNKTNNVKKF</sequence>
<protein>
    <recommendedName>
        <fullName evidence="1">Small ribosomal subunit protein bS6c</fullName>
    </recommendedName>
    <alternativeName>
        <fullName evidence="2">30S ribosomal protein S6, chloroplastic</fullName>
    </alternativeName>
</protein>
<evidence type="ECO:0000255" key="1">
    <source>
        <dbReference type="HAMAP-Rule" id="MF_00360"/>
    </source>
</evidence>
<evidence type="ECO:0000305" key="2"/>
<reference key="1">
    <citation type="journal article" date="2007" name="Mol. Genet. Genomics">
        <title>Chloroplast genomes of the diatoms Phaeodactylum tricornutum and Thalassiosira pseudonana: comparison with other plastid genomes of the red lineage.</title>
        <authorList>
            <person name="Oudot-Le Secq M.-P."/>
            <person name="Grimwood J."/>
            <person name="Shapiro H."/>
            <person name="Armbrust E.V."/>
            <person name="Bowler C."/>
            <person name="Green B.R."/>
        </authorList>
    </citation>
    <scope>NUCLEOTIDE SEQUENCE [LARGE SCALE GENOMIC DNA]</scope>
    <source>
        <strain>CCMP1335 / NEPCC58 / CCAP 1085/12</strain>
    </source>
</reference>
<dbReference type="EMBL" id="EF067921">
    <property type="protein sequence ID" value="ABK20839.1"/>
    <property type="molecule type" value="Genomic_DNA"/>
</dbReference>
<dbReference type="RefSeq" id="YP_874616.1">
    <property type="nucleotide sequence ID" value="NC_008589.1"/>
</dbReference>
<dbReference type="SMR" id="A0T104"/>
<dbReference type="STRING" id="35128.A0T104"/>
<dbReference type="PaxDb" id="35128-Thapsdraft1447"/>
<dbReference type="GeneID" id="4524862"/>
<dbReference type="eggNOG" id="ENOG502QYHP">
    <property type="taxonomic scope" value="Eukaryota"/>
</dbReference>
<dbReference type="InParanoid" id="A0T104"/>
<dbReference type="GO" id="GO:0009507">
    <property type="term" value="C:chloroplast"/>
    <property type="evidence" value="ECO:0007669"/>
    <property type="project" value="UniProtKB-SubCell"/>
</dbReference>
<dbReference type="GO" id="GO:1990904">
    <property type="term" value="C:ribonucleoprotein complex"/>
    <property type="evidence" value="ECO:0007669"/>
    <property type="project" value="UniProtKB-KW"/>
</dbReference>
<dbReference type="GO" id="GO:0005840">
    <property type="term" value="C:ribosome"/>
    <property type="evidence" value="ECO:0007669"/>
    <property type="project" value="UniProtKB-KW"/>
</dbReference>
<dbReference type="GO" id="GO:0070181">
    <property type="term" value="F:small ribosomal subunit rRNA binding"/>
    <property type="evidence" value="ECO:0000318"/>
    <property type="project" value="GO_Central"/>
</dbReference>
<dbReference type="GO" id="GO:0003735">
    <property type="term" value="F:structural constituent of ribosome"/>
    <property type="evidence" value="ECO:0000318"/>
    <property type="project" value="GO_Central"/>
</dbReference>
<dbReference type="GO" id="GO:0006412">
    <property type="term" value="P:translation"/>
    <property type="evidence" value="ECO:0007669"/>
    <property type="project" value="UniProtKB-UniRule"/>
</dbReference>
<dbReference type="CDD" id="cd00473">
    <property type="entry name" value="bS6"/>
    <property type="match status" value="1"/>
</dbReference>
<dbReference type="Gene3D" id="3.30.70.60">
    <property type="match status" value="1"/>
</dbReference>
<dbReference type="HAMAP" id="MF_00360">
    <property type="entry name" value="Ribosomal_bS6"/>
    <property type="match status" value="1"/>
</dbReference>
<dbReference type="InterPro" id="IPR000529">
    <property type="entry name" value="Ribosomal_bS6"/>
</dbReference>
<dbReference type="InterPro" id="IPR020815">
    <property type="entry name" value="Ribosomal_bS6_CS"/>
</dbReference>
<dbReference type="InterPro" id="IPR035980">
    <property type="entry name" value="Ribosomal_bS6_sf"/>
</dbReference>
<dbReference type="InterPro" id="IPR020814">
    <property type="entry name" value="Ribosomal_S6_plastid/chlpt"/>
</dbReference>
<dbReference type="InterPro" id="IPR014717">
    <property type="entry name" value="Transl_elong_EF1B/ribsomal_bS6"/>
</dbReference>
<dbReference type="NCBIfam" id="TIGR00166">
    <property type="entry name" value="S6"/>
    <property type="match status" value="1"/>
</dbReference>
<dbReference type="PANTHER" id="PTHR21011">
    <property type="entry name" value="MITOCHONDRIAL 28S RIBOSOMAL PROTEIN S6"/>
    <property type="match status" value="1"/>
</dbReference>
<dbReference type="PANTHER" id="PTHR21011:SF1">
    <property type="entry name" value="SMALL RIBOSOMAL SUBUNIT PROTEIN BS6M"/>
    <property type="match status" value="1"/>
</dbReference>
<dbReference type="Pfam" id="PF01250">
    <property type="entry name" value="Ribosomal_S6"/>
    <property type="match status" value="1"/>
</dbReference>
<dbReference type="SUPFAM" id="SSF54995">
    <property type="entry name" value="Ribosomal protein S6"/>
    <property type="match status" value="1"/>
</dbReference>
<dbReference type="PROSITE" id="PS01048">
    <property type="entry name" value="RIBOSOMAL_S6"/>
    <property type="match status" value="1"/>
</dbReference>
<comment type="function">
    <text evidence="1">Binds together with bS18 to 16S ribosomal RNA.</text>
</comment>
<comment type="subcellular location">
    <subcellularLocation>
        <location>Plastid</location>
        <location>Chloroplast</location>
    </subcellularLocation>
</comment>
<comment type="similarity">
    <text evidence="1">Belongs to the bacterial ribosomal protein bS6 family.</text>
</comment>
<gene>
    <name evidence="1" type="primary">rps6</name>
</gene>
<organism>
    <name type="scientific">Thalassiosira pseudonana</name>
    <name type="common">Marine diatom</name>
    <name type="synonym">Cyclotella nana</name>
    <dbReference type="NCBI Taxonomy" id="35128"/>
    <lineage>
        <taxon>Eukaryota</taxon>
        <taxon>Sar</taxon>
        <taxon>Stramenopiles</taxon>
        <taxon>Ochrophyta</taxon>
        <taxon>Bacillariophyta</taxon>
        <taxon>Coscinodiscophyceae</taxon>
        <taxon>Thalassiosirophycidae</taxon>
        <taxon>Thalassiosirales</taxon>
        <taxon>Thalassiosiraceae</taxon>
        <taxon>Thalassiosira</taxon>
    </lineage>
</organism>
<proteinExistence type="inferred from homology"/>
<feature type="chain" id="PRO_0000277031" description="Small ribosomal subunit protein bS6c">
    <location>
        <begin position="1"/>
        <end position="103"/>
    </location>
</feature>
<keyword id="KW-0150">Chloroplast</keyword>
<keyword id="KW-0934">Plastid</keyword>
<keyword id="KW-0687">Ribonucleoprotein</keyword>
<keyword id="KW-0689">Ribosomal protein</keyword>
<keyword id="KW-0694">RNA-binding</keyword>
<keyword id="KW-0699">rRNA-binding</keyword>
<name>RR6_THAPS</name>
<accession>A0T104</accession>
<geneLocation type="chloroplast"/>